<proteinExistence type="inferred from homology"/>
<evidence type="ECO:0000255" key="1">
    <source>
        <dbReference type="HAMAP-Rule" id="MF_00101"/>
    </source>
</evidence>
<keyword id="KW-0963">Cytoplasm</keyword>
<keyword id="KW-0275">Fatty acid biosynthesis</keyword>
<keyword id="KW-0276">Fatty acid metabolism</keyword>
<keyword id="KW-0444">Lipid biosynthesis</keyword>
<keyword id="KW-0443">Lipid metabolism</keyword>
<keyword id="KW-0460">Magnesium</keyword>
<keyword id="KW-0479">Metal-binding</keyword>
<keyword id="KW-1185">Reference proteome</keyword>
<keyword id="KW-0808">Transferase</keyword>
<gene>
    <name evidence="1" type="primary">acpS</name>
    <name type="ordered locus">Dshi_0198</name>
</gene>
<sequence length="139" mass="15623">MIIGIGTDLANIERIERTLERFGDRFRHRVFTEREQRKADSRQQTAATYAKRWAAKEACSKALGTGLRMGISWRDMAVQNLETGQPTMYVTGWAAERLKQLTPEGHEAVIHVSLTDDHPWAQAYVVISAIPLEAAARSA</sequence>
<feature type="chain" id="PRO_1000075639" description="Holo-[acyl-carrier-protein] synthase">
    <location>
        <begin position="1"/>
        <end position="139"/>
    </location>
</feature>
<feature type="binding site" evidence="1">
    <location>
        <position position="8"/>
    </location>
    <ligand>
        <name>Mg(2+)</name>
        <dbReference type="ChEBI" id="CHEBI:18420"/>
    </ligand>
</feature>
<feature type="binding site" evidence="1">
    <location>
        <position position="57"/>
    </location>
    <ligand>
        <name>Mg(2+)</name>
        <dbReference type="ChEBI" id="CHEBI:18420"/>
    </ligand>
</feature>
<accession>A8LLD7</accession>
<protein>
    <recommendedName>
        <fullName evidence="1">Holo-[acyl-carrier-protein] synthase</fullName>
        <shortName evidence="1">Holo-ACP synthase</shortName>
        <ecNumber evidence="1">2.7.8.7</ecNumber>
    </recommendedName>
    <alternativeName>
        <fullName evidence="1">4'-phosphopantetheinyl transferase AcpS</fullName>
    </alternativeName>
</protein>
<comment type="function">
    <text evidence="1">Transfers the 4'-phosphopantetheine moiety from coenzyme A to a Ser of acyl-carrier-protein.</text>
</comment>
<comment type="catalytic activity">
    <reaction evidence="1">
        <text>apo-[ACP] + CoA = holo-[ACP] + adenosine 3',5'-bisphosphate + H(+)</text>
        <dbReference type="Rhea" id="RHEA:12068"/>
        <dbReference type="Rhea" id="RHEA-COMP:9685"/>
        <dbReference type="Rhea" id="RHEA-COMP:9690"/>
        <dbReference type="ChEBI" id="CHEBI:15378"/>
        <dbReference type="ChEBI" id="CHEBI:29999"/>
        <dbReference type="ChEBI" id="CHEBI:57287"/>
        <dbReference type="ChEBI" id="CHEBI:58343"/>
        <dbReference type="ChEBI" id="CHEBI:64479"/>
        <dbReference type="EC" id="2.7.8.7"/>
    </reaction>
</comment>
<comment type="cofactor">
    <cofactor evidence="1">
        <name>Mg(2+)</name>
        <dbReference type="ChEBI" id="CHEBI:18420"/>
    </cofactor>
</comment>
<comment type="subcellular location">
    <subcellularLocation>
        <location evidence="1">Cytoplasm</location>
    </subcellularLocation>
</comment>
<comment type="similarity">
    <text evidence="1">Belongs to the P-Pant transferase superfamily. AcpS family.</text>
</comment>
<name>ACPS_DINSH</name>
<dbReference type="EC" id="2.7.8.7" evidence="1"/>
<dbReference type="EMBL" id="CP000830">
    <property type="protein sequence ID" value="ABV91947.1"/>
    <property type="molecule type" value="Genomic_DNA"/>
</dbReference>
<dbReference type="RefSeq" id="WP_012176880.1">
    <property type="nucleotide sequence ID" value="NC_009952.1"/>
</dbReference>
<dbReference type="SMR" id="A8LLD7"/>
<dbReference type="STRING" id="398580.Dshi_0198"/>
<dbReference type="KEGG" id="dsh:Dshi_0198"/>
<dbReference type="eggNOG" id="COG0736">
    <property type="taxonomic scope" value="Bacteria"/>
</dbReference>
<dbReference type="HOGENOM" id="CLU_089696_0_2_5"/>
<dbReference type="OrthoDB" id="517356at2"/>
<dbReference type="Proteomes" id="UP000006833">
    <property type="component" value="Chromosome"/>
</dbReference>
<dbReference type="GO" id="GO:0005737">
    <property type="term" value="C:cytoplasm"/>
    <property type="evidence" value="ECO:0007669"/>
    <property type="project" value="UniProtKB-SubCell"/>
</dbReference>
<dbReference type="GO" id="GO:0008897">
    <property type="term" value="F:holo-[acyl-carrier-protein] synthase activity"/>
    <property type="evidence" value="ECO:0007669"/>
    <property type="project" value="UniProtKB-UniRule"/>
</dbReference>
<dbReference type="GO" id="GO:0000287">
    <property type="term" value="F:magnesium ion binding"/>
    <property type="evidence" value="ECO:0007669"/>
    <property type="project" value="UniProtKB-UniRule"/>
</dbReference>
<dbReference type="GO" id="GO:0006633">
    <property type="term" value="P:fatty acid biosynthetic process"/>
    <property type="evidence" value="ECO:0007669"/>
    <property type="project" value="UniProtKB-UniRule"/>
</dbReference>
<dbReference type="Gene3D" id="3.90.470.20">
    <property type="entry name" value="4'-phosphopantetheinyl transferase domain"/>
    <property type="match status" value="1"/>
</dbReference>
<dbReference type="HAMAP" id="MF_00101">
    <property type="entry name" value="AcpS"/>
    <property type="match status" value="1"/>
</dbReference>
<dbReference type="InterPro" id="IPR008278">
    <property type="entry name" value="4-PPantetheinyl_Trfase_dom"/>
</dbReference>
<dbReference type="InterPro" id="IPR037143">
    <property type="entry name" value="4-PPantetheinyl_Trfase_dom_sf"/>
</dbReference>
<dbReference type="InterPro" id="IPR002582">
    <property type="entry name" value="ACPS"/>
</dbReference>
<dbReference type="InterPro" id="IPR004568">
    <property type="entry name" value="Ppantetheine-prot_Trfase_dom"/>
</dbReference>
<dbReference type="NCBIfam" id="TIGR00516">
    <property type="entry name" value="acpS"/>
    <property type="match status" value="1"/>
</dbReference>
<dbReference type="NCBIfam" id="TIGR00556">
    <property type="entry name" value="pantethn_trn"/>
    <property type="match status" value="1"/>
</dbReference>
<dbReference type="Pfam" id="PF01648">
    <property type="entry name" value="ACPS"/>
    <property type="match status" value="1"/>
</dbReference>
<dbReference type="SUPFAM" id="SSF56214">
    <property type="entry name" value="4'-phosphopantetheinyl transferase"/>
    <property type="match status" value="1"/>
</dbReference>
<organism>
    <name type="scientific">Dinoroseobacter shibae (strain DSM 16493 / NCIMB 14021 / DFL 12)</name>
    <dbReference type="NCBI Taxonomy" id="398580"/>
    <lineage>
        <taxon>Bacteria</taxon>
        <taxon>Pseudomonadati</taxon>
        <taxon>Pseudomonadota</taxon>
        <taxon>Alphaproteobacteria</taxon>
        <taxon>Rhodobacterales</taxon>
        <taxon>Roseobacteraceae</taxon>
        <taxon>Dinoroseobacter</taxon>
    </lineage>
</organism>
<reference key="1">
    <citation type="journal article" date="2010" name="ISME J.">
        <title>The complete genome sequence of the algal symbiont Dinoroseobacter shibae: a hitchhiker's guide to life in the sea.</title>
        <authorList>
            <person name="Wagner-Dobler I."/>
            <person name="Ballhausen B."/>
            <person name="Berger M."/>
            <person name="Brinkhoff T."/>
            <person name="Buchholz I."/>
            <person name="Bunk B."/>
            <person name="Cypionka H."/>
            <person name="Daniel R."/>
            <person name="Drepper T."/>
            <person name="Gerdts G."/>
            <person name="Hahnke S."/>
            <person name="Han C."/>
            <person name="Jahn D."/>
            <person name="Kalhoefer D."/>
            <person name="Kiss H."/>
            <person name="Klenk H.P."/>
            <person name="Kyrpides N."/>
            <person name="Liebl W."/>
            <person name="Liesegang H."/>
            <person name="Meincke L."/>
            <person name="Pati A."/>
            <person name="Petersen J."/>
            <person name="Piekarski T."/>
            <person name="Pommerenke C."/>
            <person name="Pradella S."/>
            <person name="Pukall R."/>
            <person name="Rabus R."/>
            <person name="Stackebrandt E."/>
            <person name="Thole S."/>
            <person name="Thompson L."/>
            <person name="Tielen P."/>
            <person name="Tomasch J."/>
            <person name="von Jan M."/>
            <person name="Wanphrut N."/>
            <person name="Wichels A."/>
            <person name="Zech H."/>
            <person name="Simon M."/>
        </authorList>
    </citation>
    <scope>NUCLEOTIDE SEQUENCE [LARGE SCALE GENOMIC DNA]</scope>
    <source>
        <strain>DSM 16493 / NCIMB 14021 / DFL 12</strain>
    </source>
</reference>